<dbReference type="EC" id="7.1.1.-" evidence="1"/>
<dbReference type="EMBL" id="CP000820">
    <property type="protein sequence ID" value="ABW15428.1"/>
    <property type="molecule type" value="Genomic_DNA"/>
</dbReference>
<dbReference type="RefSeq" id="WP_020463509.1">
    <property type="nucleotide sequence ID" value="NC_009921.1"/>
</dbReference>
<dbReference type="SMR" id="A8LC91"/>
<dbReference type="STRING" id="298653.Franean1_6084"/>
<dbReference type="KEGG" id="fre:Franean1_6084"/>
<dbReference type="eggNOG" id="COG0713">
    <property type="taxonomic scope" value="Bacteria"/>
</dbReference>
<dbReference type="HOGENOM" id="CLU_144724_0_0_11"/>
<dbReference type="GO" id="GO:0030964">
    <property type="term" value="C:NADH dehydrogenase complex"/>
    <property type="evidence" value="ECO:0007669"/>
    <property type="project" value="TreeGrafter"/>
</dbReference>
<dbReference type="GO" id="GO:0005886">
    <property type="term" value="C:plasma membrane"/>
    <property type="evidence" value="ECO:0007669"/>
    <property type="project" value="UniProtKB-SubCell"/>
</dbReference>
<dbReference type="GO" id="GO:0050136">
    <property type="term" value="F:NADH:ubiquinone reductase (non-electrogenic) activity"/>
    <property type="evidence" value="ECO:0007669"/>
    <property type="project" value="UniProtKB-UniRule"/>
</dbReference>
<dbReference type="GO" id="GO:0048038">
    <property type="term" value="F:quinone binding"/>
    <property type="evidence" value="ECO:0007669"/>
    <property type="project" value="UniProtKB-KW"/>
</dbReference>
<dbReference type="GO" id="GO:0042773">
    <property type="term" value="P:ATP synthesis coupled electron transport"/>
    <property type="evidence" value="ECO:0007669"/>
    <property type="project" value="InterPro"/>
</dbReference>
<dbReference type="FunFam" id="1.10.287.3510:FF:000001">
    <property type="entry name" value="NADH-quinone oxidoreductase subunit K"/>
    <property type="match status" value="1"/>
</dbReference>
<dbReference type="Gene3D" id="1.10.287.3510">
    <property type="match status" value="1"/>
</dbReference>
<dbReference type="HAMAP" id="MF_01456">
    <property type="entry name" value="NDH1_NuoK"/>
    <property type="match status" value="1"/>
</dbReference>
<dbReference type="InterPro" id="IPR001133">
    <property type="entry name" value="NADH_UbQ_OxRdtase_chain4L/K"/>
</dbReference>
<dbReference type="InterPro" id="IPR039428">
    <property type="entry name" value="NUOK/Mnh_C1-like"/>
</dbReference>
<dbReference type="NCBIfam" id="NF004320">
    <property type="entry name" value="PRK05715.1-2"/>
    <property type="match status" value="1"/>
</dbReference>
<dbReference type="NCBIfam" id="NF004321">
    <property type="entry name" value="PRK05715.1-3"/>
    <property type="match status" value="1"/>
</dbReference>
<dbReference type="NCBIfam" id="NF004323">
    <property type="entry name" value="PRK05715.1-5"/>
    <property type="match status" value="1"/>
</dbReference>
<dbReference type="PANTHER" id="PTHR11434:SF21">
    <property type="entry name" value="NADH DEHYDROGENASE SUBUNIT 4L-RELATED"/>
    <property type="match status" value="1"/>
</dbReference>
<dbReference type="PANTHER" id="PTHR11434">
    <property type="entry name" value="NADH-UBIQUINONE OXIDOREDUCTASE SUBUNIT ND4L"/>
    <property type="match status" value="1"/>
</dbReference>
<dbReference type="Pfam" id="PF00420">
    <property type="entry name" value="Oxidored_q2"/>
    <property type="match status" value="1"/>
</dbReference>
<organism>
    <name type="scientific">Parafrankia sp. (strain EAN1pec)</name>
    <dbReference type="NCBI Taxonomy" id="298653"/>
    <lineage>
        <taxon>Bacteria</taxon>
        <taxon>Bacillati</taxon>
        <taxon>Actinomycetota</taxon>
        <taxon>Actinomycetes</taxon>
        <taxon>Frankiales</taxon>
        <taxon>Frankiaceae</taxon>
        <taxon>Parafrankia</taxon>
    </lineage>
</organism>
<protein>
    <recommendedName>
        <fullName evidence="1">NADH-quinone oxidoreductase subunit K</fullName>
        <ecNumber evidence="1">7.1.1.-</ecNumber>
    </recommendedName>
    <alternativeName>
        <fullName evidence="1">NADH dehydrogenase I subunit K</fullName>
    </alternativeName>
    <alternativeName>
        <fullName evidence="1">NDH-1 subunit K</fullName>
    </alternativeName>
</protein>
<keyword id="KW-1003">Cell membrane</keyword>
<keyword id="KW-0472">Membrane</keyword>
<keyword id="KW-0520">NAD</keyword>
<keyword id="KW-0874">Quinone</keyword>
<keyword id="KW-1278">Translocase</keyword>
<keyword id="KW-0812">Transmembrane</keyword>
<keyword id="KW-1133">Transmembrane helix</keyword>
<keyword id="KW-0813">Transport</keyword>
<name>NUOK_PARS2</name>
<evidence type="ECO:0000255" key="1">
    <source>
        <dbReference type="HAMAP-Rule" id="MF_01456"/>
    </source>
</evidence>
<comment type="function">
    <text evidence="1">NDH-1 shuttles electrons from NADH, via FMN and iron-sulfur (Fe-S) centers, to quinones in the respiratory chain. The immediate electron acceptor for the enzyme in this species is believed to be a menaquinone. Couples the redox reaction to proton translocation (for every two electrons transferred, four hydrogen ions are translocated across the cytoplasmic membrane), and thus conserves the redox energy in a proton gradient.</text>
</comment>
<comment type="catalytic activity">
    <reaction evidence="1">
        <text>a quinone + NADH + 5 H(+)(in) = a quinol + NAD(+) + 4 H(+)(out)</text>
        <dbReference type="Rhea" id="RHEA:57888"/>
        <dbReference type="ChEBI" id="CHEBI:15378"/>
        <dbReference type="ChEBI" id="CHEBI:24646"/>
        <dbReference type="ChEBI" id="CHEBI:57540"/>
        <dbReference type="ChEBI" id="CHEBI:57945"/>
        <dbReference type="ChEBI" id="CHEBI:132124"/>
    </reaction>
</comment>
<comment type="subunit">
    <text evidence="1">NDH-1 is composed of 14 different subunits. Subunits NuoA, H, J, K, L, M, N constitute the membrane sector of the complex.</text>
</comment>
<comment type="subcellular location">
    <subcellularLocation>
        <location evidence="1">Cell membrane</location>
        <topology evidence="1">Multi-pass membrane protein</topology>
    </subcellularLocation>
</comment>
<comment type="similarity">
    <text evidence="1">Belongs to the complex I subunit 4L family.</text>
</comment>
<proteinExistence type="inferred from homology"/>
<sequence length="99" mass="10770">MNPANYLILSGLLFTIGATGVLVRRNAIVVFMSIELMLNAVNLTLVTFSRIHGTLEGQIMAFFVMVVAAAEVVVGLAIILAIFRTRRSASVDDVNLLKY</sequence>
<reference key="1">
    <citation type="journal article" date="2007" name="Genome Res.">
        <title>Genome characteristics of facultatively symbiotic Frankia sp. strains reflect host range and host plant biogeography.</title>
        <authorList>
            <person name="Normand P."/>
            <person name="Lapierre P."/>
            <person name="Tisa L.S."/>
            <person name="Gogarten J.P."/>
            <person name="Alloisio N."/>
            <person name="Bagnarol E."/>
            <person name="Bassi C.A."/>
            <person name="Berry A.M."/>
            <person name="Bickhart D.M."/>
            <person name="Choisne N."/>
            <person name="Couloux A."/>
            <person name="Cournoyer B."/>
            <person name="Cruveiller S."/>
            <person name="Daubin V."/>
            <person name="Demange N."/>
            <person name="Francino M.P."/>
            <person name="Goltsman E."/>
            <person name="Huang Y."/>
            <person name="Kopp O.R."/>
            <person name="Labarre L."/>
            <person name="Lapidus A."/>
            <person name="Lavire C."/>
            <person name="Marechal J."/>
            <person name="Martinez M."/>
            <person name="Mastronunzio J.E."/>
            <person name="Mullin B.C."/>
            <person name="Niemann J."/>
            <person name="Pujic P."/>
            <person name="Rawnsley T."/>
            <person name="Rouy Z."/>
            <person name="Schenowitz C."/>
            <person name="Sellstedt A."/>
            <person name="Tavares F."/>
            <person name="Tomkins J.P."/>
            <person name="Vallenet D."/>
            <person name="Valverde C."/>
            <person name="Wall L.G."/>
            <person name="Wang Y."/>
            <person name="Medigue C."/>
            <person name="Benson D.R."/>
        </authorList>
    </citation>
    <scope>NUCLEOTIDE SEQUENCE [LARGE SCALE GENOMIC DNA]</scope>
    <source>
        <strain>EAN1pec</strain>
    </source>
</reference>
<feature type="chain" id="PRO_0000390071" description="NADH-quinone oxidoreductase subunit K">
    <location>
        <begin position="1"/>
        <end position="99"/>
    </location>
</feature>
<feature type="transmembrane region" description="Helical" evidence="1">
    <location>
        <begin position="3"/>
        <end position="23"/>
    </location>
</feature>
<feature type="transmembrane region" description="Helical" evidence="1">
    <location>
        <begin position="28"/>
        <end position="48"/>
    </location>
</feature>
<feature type="transmembrane region" description="Helical" evidence="1">
    <location>
        <begin position="62"/>
        <end position="82"/>
    </location>
</feature>
<accession>A8LC91</accession>
<gene>
    <name evidence="1" type="primary">nuoK</name>
    <name type="ordered locus">Franean1_6084</name>
</gene>